<keyword id="KW-0067">ATP-binding</keyword>
<keyword id="KW-0963">Cytoplasm</keyword>
<keyword id="KW-0418">Kinase</keyword>
<keyword id="KW-0547">Nucleotide-binding</keyword>
<keyword id="KW-0808">Transferase</keyword>
<sequence length="221" mass="25694">MTFFESELSAKKRDQRRGFLFILSSPSGAGKSTLSRLLLKDAQLERSVSVTTRQRRPSEVDGFHYHFVSKQEFECKRDGDEFIEWAEVHGNYYGTLRKSVENALSAGRDILFDIDYQGTEQLQKKMPGDTVSIFILPPSMKELILRLHRRAEDSQDIINLRLKNAQTEMQHWRFYDYVVINKDLNQSASLIKSIYLAETARRKRCSFLESFVDGLIDEKIN</sequence>
<comment type="function">
    <text evidence="1">Essential for recycling GMP and indirectly, cGMP.</text>
</comment>
<comment type="catalytic activity">
    <reaction evidence="1">
        <text>GMP + ATP = GDP + ADP</text>
        <dbReference type="Rhea" id="RHEA:20780"/>
        <dbReference type="ChEBI" id="CHEBI:30616"/>
        <dbReference type="ChEBI" id="CHEBI:58115"/>
        <dbReference type="ChEBI" id="CHEBI:58189"/>
        <dbReference type="ChEBI" id="CHEBI:456216"/>
        <dbReference type="EC" id="2.7.4.8"/>
    </reaction>
</comment>
<comment type="subcellular location">
    <subcellularLocation>
        <location evidence="1">Cytoplasm</location>
    </subcellularLocation>
</comment>
<comment type="similarity">
    <text evidence="1">Belongs to the guanylate kinase family.</text>
</comment>
<accession>Q6G053</accession>
<dbReference type="EC" id="2.7.4.8" evidence="1"/>
<dbReference type="EMBL" id="BX897700">
    <property type="protein sequence ID" value="CAF25956.1"/>
    <property type="molecule type" value="Genomic_DNA"/>
</dbReference>
<dbReference type="RefSeq" id="WP_011179244.1">
    <property type="nucleotide sequence ID" value="NC_005955.1"/>
</dbReference>
<dbReference type="SMR" id="Q6G053"/>
<dbReference type="KEGG" id="bqu:BQ04570"/>
<dbReference type="eggNOG" id="COG0194">
    <property type="taxonomic scope" value="Bacteria"/>
</dbReference>
<dbReference type="HOGENOM" id="CLU_001715_1_2_5"/>
<dbReference type="OrthoDB" id="9808150at2"/>
<dbReference type="Proteomes" id="UP000000597">
    <property type="component" value="Chromosome"/>
</dbReference>
<dbReference type="GO" id="GO:0005829">
    <property type="term" value="C:cytosol"/>
    <property type="evidence" value="ECO:0007669"/>
    <property type="project" value="TreeGrafter"/>
</dbReference>
<dbReference type="GO" id="GO:0005524">
    <property type="term" value="F:ATP binding"/>
    <property type="evidence" value="ECO:0007669"/>
    <property type="project" value="UniProtKB-UniRule"/>
</dbReference>
<dbReference type="GO" id="GO:0004385">
    <property type="term" value="F:guanylate kinase activity"/>
    <property type="evidence" value="ECO:0007669"/>
    <property type="project" value="UniProtKB-UniRule"/>
</dbReference>
<dbReference type="CDD" id="cd00071">
    <property type="entry name" value="GMPK"/>
    <property type="match status" value="1"/>
</dbReference>
<dbReference type="FunFam" id="3.30.63.10:FF:000002">
    <property type="entry name" value="Guanylate kinase 1"/>
    <property type="match status" value="1"/>
</dbReference>
<dbReference type="Gene3D" id="3.30.63.10">
    <property type="entry name" value="Guanylate Kinase phosphate binding domain"/>
    <property type="match status" value="1"/>
</dbReference>
<dbReference type="Gene3D" id="3.40.50.300">
    <property type="entry name" value="P-loop containing nucleotide triphosphate hydrolases"/>
    <property type="match status" value="1"/>
</dbReference>
<dbReference type="HAMAP" id="MF_00328">
    <property type="entry name" value="Guanylate_kinase"/>
    <property type="match status" value="1"/>
</dbReference>
<dbReference type="InterPro" id="IPR008145">
    <property type="entry name" value="GK/Ca_channel_bsu"/>
</dbReference>
<dbReference type="InterPro" id="IPR008144">
    <property type="entry name" value="Guanylate_kin-like_dom"/>
</dbReference>
<dbReference type="InterPro" id="IPR017665">
    <property type="entry name" value="Guanylate_kinase"/>
</dbReference>
<dbReference type="InterPro" id="IPR020590">
    <property type="entry name" value="Guanylate_kinase_CS"/>
</dbReference>
<dbReference type="InterPro" id="IPR027417">
    <property type="entry name" value="P-loop_NTPase"/>
</dbReference>
<dbReference type="NCBIfam" id="TIGR03263">
    <property type="entry name" value="guanyl_kin"/>
    <property type="match status" value="1"/>
</dbReference>
<dbReference type="PANTHER" id="PTHR23117:SF13">
    <property type="entry name" value="GUANYLATE KINASE"/>
    <property type="match status" value="1"/>
</dbReference>
<dbReference type="PANTHER" id="PTHR23117">
    <property type="entry name" value="GUANYLATE KINASE-RELATED"/>
    <property type="match status" value="1"/>
</dbReference>
<dbReference type="Pfam" id="PF00625">
    <property type="entry name" value="Guanylate_kin"/>
    <property type="match status" value="1"/>
</dbReference>
<dbReference type="SMART" id="SM00072">
    <property type="entry name" value="GuKc"/>
    <property type="match status" value="1"/>
</dbReference>
<dbReference type="SUPFAM" id="SSF52540">
    <property type="entry name" value="P-loop containing nucleoside triphosphate hydrolases"/>
    <property type="match status" value="1"/>
</dbReference>
<dbReference type="PROSITE" id="PS00856">
    <property type="entry name" value="GUANYLATE_KINASE_1"/>
    <property type="match status" value="1"/>
</dbReference>
<dbReference type="PROSITE" id="PS50052">
    <property type="entry name" value="GUANYLATE_KINASE_2"/>
    <property type="match status" value="1"/>
</dbReference>
<name>KGUA_BARQU</name>
<evidence type="ECO:0000255" key="1">
    <source>
        <dbReference type="HAMAP-Rule" id="MF_00328"/>
    </source>
</evidence>
<organism>
    <name type="scientific">Bartonella quintana (strain Toulouse)</name>
    <name type="common">Rochalimaea quintana</name>
    <dbReference type="NCBI Taxonomy" id="283165"/>
    <lineage>
        <taxon>Bacteria</taxon>
        <taxon>Pseudomonadati</taxon>
        <taxon>Pseudomonadota</taxon>
        <taxon>Alphaproteobacteria</taxon>
        <taxon>Hyphomicrobiales</taxon>
        <taxon>Bartonellaceae</taxon>
        <taxon>Bartonella</taxon>
    </lineage>
</organism>
<feature type="chain" id="PRO_0000170501" description="Guanylate kinase">
    <location>
        <begin position="1"/>
        <end position="221"/>
    </location>
</feature>
<feature type="domain" description="Guanylate kinase-like" evidence="1">
    <location>
        <begin position="18"/>
        <end position="196"/>
    </location>
</feature>
<feature type="binding site" evidence="1">
    <location>
        <begin position="25"/>
        <end position="32"/>
    </location>
    <ligand>
        <name>ATP</name>
        <dbReference type="ChEBI" id="CHEBI:30616"/>
    </ligand>
</feature>
<gene>
    <name evidence="1" type="primary">gmk</name>
    <name type="ordered locus">BQ04570</name>
</gene>
<protein>
    <recommendedName>
        <fullName evidence="1">Guanylate kinase</fullName>
        <ecNumber evidence="1">2.7.4.8</ecNumber>
    </recommendedName>
    <alternativeName>
        <fullName evidence="1">GMP kinase</fullName>
    </alternativeName>
</protein>
<proteinExistence type="inferred from homology"/>
<reference key="1">
    <citation type="journal article" date="2004" name="Proc. Natl. Acad. Sci. U.S.A.">
        <title>The louse-borne human pathogen Bartonella quintana is a genomic derivative of the zoonotic agent Bartonella henselae.</title>
        <authorList>
            <person name="Alsmark U.C.M."/>
            <person name="Frank A.C."/>
            <person name="Karlberg E.O."/>
            <person name="Legault B.-A."/>
            <person name="Ardell D.H."/>
            <person name="Canbaeck B."/>
            <person name="Eriksson A.-S."/>
            <person name="Naeslund A.K."/>
            <person name="Handley S.A."/>
            <person name="Huvet M."/>
            <person name="La Scola B."/>
            <person name="Holmberg M."/>
            <person name="Andersson S.G.E."/>
        </authorList>
    </citation>
    <scope>NUCLEOTIDE SEQUENCE [LARGE SCALE GENOMIC DNA]</scope>
    <source>
        <strain>Toulouse</strain>
    </source>
</reference>